<sequence length="310" mass="34482">MLTTEKLVETLKLDLIAGEEGLSKPIKNADISRPGLEMAGYFSHYASDRIQLLGTTELSFYNLLPDKDRAGRMRKLCRPETPAIIVTRGLQPPEELVEAAKELNTPLIVAKDATTSLMSRLTTFLEHALAKTTSLHGVLVDVYGVGVLITGDSGIGKSETALELVKRGHRLVADDNVEIRQINKDELIGKPPKLIEHLLEIRGLGIINVMTLFGAGSILTEKRIRLNINLENWNKQKLYDRVGLNEETLSILDTEITKKTIPVRPGRNVAVIIEVAAMNYRLNIMGINTAEEFSERLNEEIIKNSHKSEE</sequence>
<reference key="1">
    <citation type="journal article" date="2004" name="Proc. Natl. Acad. Sci. U.S.A.">
        <title>Complete genomes of two clinical Staphylococcus aureus strains: evidence for the rapid evolution of virulence and drug resistance.</title>
        <authorList>
            <person name="Holden M.T.G."/>
            <person name="Feil E.J."/>
            <person name="Lindsay J.A."/>
            <person name="Peacock S.J."/>
            <person name="Day N.P.J."/>
            <person name="Enright M.C."/>
            <person name="Foster T.J."/>
            <person name="Moore C.E."/>
            <person name="Hurst L."/>
            <person name="Atkin R."/>
            <person name="Barron A."/>
            <person name="Bason N."/>
            <person name="Bentley S.D."/>
            <person name="Chillingworth C."/>
            <person name="Chillingworth T."/>
            <person name="Churcher C."/>
            <person name="Clark L."/>
            <person name="Corton C."/>
            <person name="Cronin A."/>
            <person name="Doggett J."/>
            <person name="Dowd L."/>
            <person name="Feltwell T."/>
            <person name="Hance Z."/>
            <person name="Harris B."/>
            <person name="Hauser H."/>
            <person name="Holroyd S."/>
            <person name="Jagels K."/>
            <person name="James K.D."/>
            <person name="Lennard N."/>
            <person name="Line A."/>
            <person name="Mayes R."/>
            <person name="Moule S."/>
            <person name="Mungall K."/>
            <person name="Ormond D."/>
            <person name="Quail M.A."/>
            <person name="Rabbinowitsch E."/>
            <person name="Rutherford K.M."/>
            <person name="Sanders M."/>
            <person name="Sharp S."/>
            <person name="Simmonds M."/>
            <person name="Stevens K."/>
            <person name="Whitehead S."/>
            <person name="Barrell B.G."/>
            <person name="Spratt B.G."/>
            <person name="Parkhill J."/>
        </authorList>
    </citation>
    <scope>NUCLEOTIDE SEQUENCE [LARGE SCALE GENOMIC DNA]</scope>
    <source>
        <strain>MRSA252</strain>
    </source>
</reference>
<organism>
    <name type="scientific">Staphylococcus aureus (strain MRSA252)</name>
    <dbReference type="NCBI Taxonomy" id="282458"/>
    <lineage>
        <taxon>Bacteria</taxon>
        <taxon>Bacillati</taxon>
        <taxon>Bacillota</taxon>
        <taxon>Bacilli</taxon>
        <taxon>Bacillales</taxon>
        <taxon>Staphylococcaceae</taxon>
        <taxon>Staphylococcus</taxon>
    </lineage>
</organism>
<gene>
    <name evidence="1" type="primary">hprK</name>
    <name type="ordered locus">SAR0814</name>
</gene>
<feature type="chain" id="PRO_0000058984" description="HPr kinase/phosphorylase">
    <location>
        <begin position="1"/>
        <end position="310"/>
    </location>
</feature>
<feature type="region of interest" description="Important for the catalytic mechanism of both phosphorylation and dephosphorylation" evidence="1">
    <location>
        <begin position="199"/>
        <end position="208"/>
    </location>
</feature>
<feature type="region of interest" description="Important for the catalytic mechanism of dephosphorylation" evidence="1">
    <location>
        <begin position="262"/>
        <end position="267"/>
    </location>
</feature>
<feature type="active site" evidence="1">
    <location>
        <position position="136"/>
    </location>
</feature>
<feature type="active site" evidence="1">
    <location>
        <position position="157"/>
    </location>
</feature>
<feature type="active site" description="Proton acceptor; for phosphorylation activity. Proton donor; for dephosphorylation activity" evidence="1">
    <location>
        <position position="175"/>
    </location>
</feature>
<feature type="active site" evidence="1">
    <location>
        <position position="241"/>
    </location>
</feature>
<feature type="binding site" evidence="1">
    <location>
        <begin position="151"/>
        <end position="158"/>
    </location>
    <ligand>
        <name>ATP</name>
        <dbReference type="ChEBI" id="CHEBI:30616"/>
    </ligand>
</feature>
<feature type="binding site" evidence="1">
    <location>
        <position position="158"/>
    </location>
    <ligand>
        <name>Mg(2+)</name>
        <dbReference type="ChEBI" id="CHEBI:18420"/>
    </ligand>
</feature>
<feature type="binding site" evidence="1">
    <location>
        <position position="200"/>
    </location>
    <ligand>
        <name>Mg(2+)</name>
        <dbReference type="ChEBI" id="CHEBI:18420"/>
    </ligand>
</feature>
<dbReference type="EC" id="2.7.11.-" evidence="1"/>
<dbReference type="EC" id="2.7.4.-" evidence="1"/>
<dbReference type="EMBL" id="BX571856">
    <property type="protein sequence ID" value="CAG39824.1"/>
    <property type="molecule type" value="Genomic_DNA"/>
</dbReference>
<dbReference type="RefSeq" id="WP_000958224.1">
    <property type="nucleotide sequence ID" value="NC_002952.2"/>
</dbReference>
<dbReference type="SMR" id="Q6GIN1"/>
<dbReference type="KEGG" id="sar:SAR0814"/>
<dbReference type="HOGENOM" id="CLU_052030_0_1_9"/>
<dbReference type="Proteomes" id="UP000000596">
    <property type="component" value="Chromosome"/>
</dbReference>
<dbReference type="GO" id="GO:0005524">
    <property type="term" value="F:ATP binding"/>
    <property type="evidence" value="ECO:0007669"/>
    <property type="project" value="UniProtKB-UniRule"/>
</dbReference>
<dbReference type="GO" id="GO:0000287">
    <property type="term" value="F:magnesium ion binding"/>
    <property type="evidence" value="ECO:0007669"/>
    <property type="project" value="UniProtKB-UniRule"/>
</dbReference>
<dbReference type="GO" id="GO:0000155">
    <property type="term" value="F:phosphorelay sensor kinase activity"/>
    <property type="evidence" value="ECO:0007669"/>
    <property type="project" value="InterPro"/>
</dbReference>
<dbReference type="GO" id="GO:0004674">
    <property type="term" value="F:protein serine/threonine kinase activity"/>
    <property type="evidence" value="ECO:0007669"/>
    <property type="project" value="UniProtKB-KW"/>
</dbReference>
<dbReference type="GO" id="GO:0004712">
    <property type="term" value="F:protein serine/threonine/tyrosine kinase activity"/>
    <property type="evidence" value="ECO:0007669"/>
    <property type="project" value="UniProtKB-UniRule"/>
</dbReference>
<dbReference type="GO" id="GO:0006109">
    <property type="term" value="P:regulation of carbohydrate metabolic process"/>
    <property type="evidence" value="ECO:0007669"/>
    <property type="project" value="UniProtKB-UniRule"/>
</dbReference>
<dbReference type="CDD" id="cd01918">
    <property type="entry name" value="HprK_C"/>
    <property type="match status" value="1"/>
</dbReference>
<dbReference type="FunFam" id="3.40.1390.20:FF:000002">
    <property type="entry name" value="HPr kinase/phosphorylase"/>
    <property type="match status" value="1"/>
</dbReference>
<dbReference type="FunFam" id="3.40.50.300:FF:000174">
    <property type="entry name" value="HPr kinase/phosphorylase"/>
    <property type="match status" value="1"/>
</dbReference>
<dbReference type="Gene3D" id="3.40.1390.20">
    <property type="entry name" value="HprK N-terminal domain-like"/>
    <property type="match status" value="1"/>
</dbReference>
<dbReference type="Gene3D" id="3.40.50.300">
    <property type="entry name" value="P-loop containing nucleotide triphosphate hydrolases"/>
    <property type="match status" value="1"/>
</dbReference>
<dbReference type="HAMAP" id="MF_01249">
    <property type="entry name" value="HPr_kinase"/>
    <property type="match status" value="1"/>
</dbReference>
<dbReference type="InterPro" id="IPR003755">
    <property type="entry name" value="HPr(Ser)_kin/Pase"/>
</dbReference>
<dbReference type="InterPro" id="IPR011104">
    <property type="entry name" value="Hpr_kin/Pase_C"/>
</dbReference>
<dbReference type="InterPro" id="IPR011126">
    <property type="entry name" value="Hpr_kin/Pase_Hpr_N"/>
</dbReference>
<dbReference type="InterPro" id="IPR027417">
    <property type="entry name" value="P-loop_NTPase"/>
</dbReference>
<dbReference type="InterPro" id="IPR028979">
    <property type="entry name" value="Ser_kin/Pase_Hpr-like_N_sf"/>
</dbReference>
<dbReference type="NCBIfam" id="TIGR00679">
    <property type="entry name" value="hpr-ser"/>
    <property type="match status" value="1"/>
</dbReference>
<dbReference type="PANTHER" id="PTHR30305:SF1">
    <property type="entry name" value="HPR KINASE_PHOSPHORYLASE"/>
    <property type="match status" value="1"/>
</dbReference>
<dbReference type="PANTHER" id="PTHR30305">
    <property type="entry name" value="PROTEIN YJDM-RELATED"/>
    <property type="match status" value="1"/>
</dbReference>
<dbReference type="Pfam" id="PF07475">
    <property type="entry name" value="Hpr_kinase_C"/>
    <property type="match status" value="1"/>
</dbReference>
<dbReference type="Pfam" id="PF02603">
    <property type="entry name" value="Hpr_kinase_N"/>
    <property type="match status" value="1"/>
</dbReference>
<dbReference type="SUPFAM" id="SSF75138">
    <property type="entry name" value="HprK N-terminal domain-like"/>
    <property type="match status" value="1"/>
</dbReference>
<dbReference type="SUPFAM" id="SSF53795">
    <property type="entry name" value="PEP carboxykinase-like"/>
    <property type="match status" value="1"/>
</dbReference>
<accession>Q6GIN1</accession>
<comment type="function">
    <text evidence="1">Catalyzes the ATP- as well as the pyrophosphate-dependent phosphorylation of a specific serine residue in HPr, a phosphocarrier protein of the phosphoenolpyruvate-dependent sugar phosphotransferase system (PTS). HprK/P also catalyzes the pyrophosphate-producing, inorganic phosphate-dependent dephosphorylation (phosphorolysis) of seryl-phosphorylated HPr (P-Ser-HPr). The two antagonistic activities of HprK/P are regulated by several intracellular metabolites, which change their concentration in response to the absence or presence of rapidly metabolisable carbon sources (glucose, fructose, etc.) in the growth medium. Therefore, by controlling the phosphorylation state of HPr, HPrK/P is a sensor enzyme that plays a major role in the regulation of carbon metabolism and sugar transport: it mediates carbon catabolite repression (CCR), and regulates PTS-catalyzed carbohydrate uptake and inducer exclusion.</text>
</comment>
<comment type="catalytic activity">
    <reaction evidence="1">
        <text>[HPr protein]-L-serine + ATP = [HPr protein]-O-phospho-L-serine + ADP + H(+)</text>
        <dbReference type="Rhea" id="RHEA:46600"/>
        <dbReference type="Rhea" id="RHEA-COMP:11602"/>
        <dbReference type="Rhea" id="RHEA-COMP:11603"/>
        <dbReference type="ChEBI" id="CHEBI:15378"/>
        <dbReference type="ChEBI" id="CHEBI:29999"/>
        <dbReference type="ChEBI" id="CHEBI:30616"/>
        <dbReference type="ChEBI" id="CHEBI:83421"/>
        <dbReference type="ChEBI" id="CHEBI:456216"/>
    </reaction>
</comment>
<comment type="catalytic activity">
    <reaction evidence="1">
        <text>[HPr protein]-O-phospho-L-serine + phosphate + H(+) = [HPr protein]-L-serine + diphosphate</text>
        <dbReference type="Rhea" id="RHEA:46604"/>
        <dbReference type="Rhea" id="RHEA-COMP:11602"/>
        <dbReference type="Rhea" id="RHEA-COMP:11603"/>
        <dbReference type="ChEBI" id="CHEBI:15378"/>
        <dbReference type="ChEBI" id="CHEBI:29999"/>
        <dbReference type="ChEBI" id="CHEBI:33019"/>
        <dbReference type="ChEBI" id="CHEBI:43474"/>
        <dbReference type="ChEBI" id="CHEBI:83421"/>
    </reaction>
</comment>
<comment type="cofactor">
    <cofactor evidence="1">
        <name>Mg(2+)</name>
        <dbReference type="ChEBI" id="CHEBI:18420"/>
    </cofactor>
</comment>
<comment type="subunit">
    <text evidence="1">Homohexamer.</text>
</comment>
<comment type="domain">
    <text evidence="1">The Walker A ATP-binding motif also binds Pi and PPi.</text>
</comment>
<comment type="miscellaneous">
    <text evidence="1">Both phosphorylation and phosphorolysis are carried out by the same active site and suggest a common mechanism for both reactions.</text>
</comment>
<comment type="similarity">
    <text evidence="1">Belongs to the HPrK/P family.</text>
</comment>
<keyword id="KW-0067">ATP-binding</keyword>
<keyword id="KW-0119">Carbohydrate metabolism</keyword>
<keyword id="KW-0418">Kinase</keyword>
<keyword id="KW-0460">Magnesium</keyword>
<keyword id="KW-0479">Metal-binding</keyword>
<keyword id="KW-0511">Multifunctional enzyme</keyword>
<keyword id="KW-0547">Nucleotide-binding</keyword>
<keyword id="KW-0723">Serine/threonine-protein kinase</keyword>
<keyword id="KW-0808">Transferase</keyword>
<name>HPRK_STAAR</name>
<protein>
    <recommendedName>
        <fullName evidence="1">HPr kinase/phosphorylase</fullName>
        <shortName evidence="1">HPrK/P</shortName>
        <ecNumber evidence="1">2.7.11.-</ecNumber>
        <ecNumber evidence="1">2.7.4.-</ecNumber>
    </recommendedName>
    <alternativeName>
        <fullName evidence="1">HPr(Ser) kinase/phosphorylase</fullName>
    </alternativeName>
</protein>
<evidence type="ECO:0000255" key="1">
    <source>
        <dbReference type="HAMAP-Rule" id="MF_01249"/>
    </source>
</evidence>
<proteinExistence type="inferred from homology"/>